<evidence type="ECO:0000250" key="1"/>
<evidence type="ECO:0000269" key="2">
    <source>
    </source>
</evidence>
<evidence type="ECO:0000305" key="3"/>
<name>SPR2B_MOUSE</name>
<dbReference type="EMBL" id="AJ005560">
    <property type="protein sequence ID" value="CAA06589.1"/>
    <property type="molecule type" value="Genomic_DNA"/>
</dbReference>
<dbReference type="EMBL" id="AY158987">
    <property type="protein sequence ID" value="AAN86824.1"/>
    <property type="molecule type" value="mRNA"/>
</dbReference>
<dbReference type="EMBL" id="AY298855">
    <property type="protein sequence ID" value="AAP57203.1"/>
    <property type="molecule type" value="mRNA"/>
</dbReference>
<dbReference type="CCDS" id="CCDS38509.1"/>
<dbReference type="FunCoup" id="O70554">
    <property type="interactions" value="6"/>
</dbReference>
<dbReference type="STRING" id="10090.ENSMUSP00000058131"/>
<dbReference type="PhosphoSitePlus" id="O70554"/>
<dbReference type="PaxDb" id="10090-ENSMUSP00000058131"/>
<dbReference type="ProteomicsDB" id="261628"/>
<dbReference type="Pumba" id="O70554"/>
<dbReference type="AGR" id="MGI:1330352"/>
<dbReference type="MGI" id="MGI:1330352">
    <property type="gene designation" value="Sprr2b"/>
</dbReference>
<dbReference type="InParanoid" id="O70554"/>
<dbReference type="PRO" id="PR:O70554"/>
<dbReference type="Proteomes" id="UP000000589">
    <property type="component" value="Unplaced"/>
</dbReference>
<dbReference type="RNAct" id="O70554">
    <property type="molecule type" value="protein"/>
</dbReference>
<dbReference type="GO" id="GO:0001533">
    <property type="term" value="C:cornified envelope"/>
    <property type="evidence" value="ECO:0000303"/>
    <property type="project" value="UniProtKB"/>
</dbReference>
<dbReference type="GO" id="GO:0005737">
    <property type="term" value="C:cytoplasm"/>
    <property type="evidence" value="ECO:0007669"/>
    <property type="project" value="UniProtKB-SubCell"/>
</dbReference>
<dbReference type="GO" id="GO:0008544">
    <property type="term" value="P:epidermis development"/>
    <property type="evidence" value="ECO:0000303"/>
    <property type="project" value="UniProtKB"/>
</dbReference>
<dbReference type="GO" id="GO:0031424">
    <property type="term" value="P:keratinization"/>
    <property type="evidence" value="ECO:0007669"/>
    <property type="project" value="UniProtKB-KW"/>
</dbReference>
<dbReference type="GO" id="GO:0030216">
    <property type="term" value="P:keratinocyte differentiation"/>
    <property type="evidence" value="ECO:0000303"/>
    <property type="project" value="UniProtKB"/>
</dbReference>
<dbReference type="GO" id="GO:0032355">
    <property type="term" value="P:response to estradiol"/>
    <property type="evidence" value="ECO:0000314"/>
    <property type="project" value="MGI"/>
</dbReference>
<dbReference type="InterPro" id="IPR029142">
    <property type="entry name" value="SPRR2"/>
</dbReference>
<dbReference type="Pfam" id="PF14820">
    <property type="entry name" value="SPRR2"/>
    <property type="match status" value="2"/>
</dbReference>
<dbReference type="PRINTS" id="PR01217">
    <property type="entry name" value="PRICHEXTENSN"/>
</dbReference>
<dbReference type="PRINTS" id="PR00021">
    <property type="entry name" value="PRORICH"/>
</dbReference>
<reference key="1">
    <citation type="journal article" date="1999" name="Genomics">
        <title>Mouse Sprr2 genes: a clustered family of genes showing differential expression in epithelial tissues.</title>
        <authorList>
            <person name="Song H.J."/>
            <person name="Poy G."/>
            <person name="Darwiche N."/>
            <person name="Lichti U."/>
            <person name="Kuroki T."/>
            <person name="Steinert P.M."/>
            <person name="Kartasova T."/>
        </authorList>
    </citation>
    <scope>NUCLEOTIDE SEQUENCE [GENOMIC DNA]</scope>
    <source>
        <strain>129/SvJ</strain>
    </source>
</reference>
<reference key="2">
    <citation type="journal article" date="2003" name="Mamm. Genome">
        <title>Mouse Sprr locus: a tandem array of coordinately regulated genes.</title>
        <authorList>
            <person name="Patel S."/>
            <person name="Kartasova T."/>
            <person name="Segre J.A."/>
        </authorList>
    </citation>
    <scope>NUCLEOTIDE SEQUENCE [MRNA]</scope>
    <source>
        <strain>C57BL/6J</strain>
    </source>
</reference>
<reference key="3">
    <citation type="submission" date="2003-05" db="EMBL/GenBank/DDBJ databases">
        <title>Small proline rich proteins in the reproductive system of female mice.</title>
        <authorList>
            <person name="Tan Y."/>
            <person name="Sun X."/>
            <person name="Wang Y."/>
        </authorList>
    </citation>
    <scope>NUCLEOTIDE SEQUENCE [MRNA]</scope>
    <source>
        <strain>CD-1</strain>
        <tissue>Uterus</tissue>
    </source>
</reference>
<reference key="4">
    <citation type="journal article" date="2004" name="Mol. Cells">
        <title>Estrogen regulates the expression of the small proline-rich 2 gene family in the mouse uterus.</title>
        <authorList>
            <person name="Hong S.H."/>
            <person name="Nah H.Y."/>
            <person name="Lee J.Y."/>
            <person name="Lee Y.J."/>
            <person name="Lee J.W."/>
            <person name="Gye M.C."/>
            <person name="Kim C.H."/>
            <person name="Kang B.M."/>
            <person name="Kim M.K."/>
        </authorList>
    </citation>
    <scope>TISSUE SPECIFICITY</scope>
    <scope>DEVELOPMENTAL STAGE</scope>
    <scope>INDUCTION</scope>
</reference>
<organism>
    <name type="scientific">Mus musculus</name>
    <name type="common">Mouse</name>
    <dbReference type="NCBI Taxonomy" id="10090"/>
    <lineage>
        <taxon>Eukaryota</taxon>
        <taxon>Metazoa</taxon>
        <taxon>Chordata</taxon>
        <taxon>Craniata</taxon>
        <taxon>Vertebrata</taxon>
        <taxon>Euteleostomi</taxon>
        <taxon>Mammalia</taxon>
        <taxon>Eutheria</taxon>
        <taxon>Euarchontoglires</taxon>
        <taxon>Glires</taxon>
        <taxon>Rodentia</taxon>
        <taxon>Myomorpha</taxon>
        <taxon>Muroidea</taxon>
        <taxon>Muridae</taxon>
        <taxon>Murinae</taxon>
        <taxon>Mus</taxon>
        <taxon>Mus</taxon>
    </lineage>
</organism>
<proteinExistence type="evidence at transcript level"/>
<keyword id="KW-0963">Cytoplasm</keyword>
<keyword id="KW-0417">Keratinization</keyword>
<keyword id="KW-1185">Reference proteome</keyword>
<keyword id="KW-0677">Repeat</keyword>
<protein>
    <recommendedName>
        <fullName>Small proline-rich protein 2B</fullName>
    </recommendedName>
</protein>
<feature type="chain" id="PRO_0000150015" description="Small proline-rich protein 2B">
    <location>
        <begin position="1"/>
        <end position="98"/>
    </location>
</feature>
<feature type="repeat" description="1">
    <location>
        <begin position="21"/>
        <end position="29"/>
    </location>
</feature>
<feature type="repeat" description="2">
    <location>
        <begin position="30"/>
        <end position="38"/>
    </location>
</feature>
<feature type="repeat" description="3">
    <location>
        <begin position="39"/>
        <end position="47"/>
    </location>
</feature>
<feature type="repeat" description="4">
    <location>
        <begin position="48"/>
        <end position="56"/>
    </location>
</feature>
<feature type="repeat" description="5">
    <location>
        <begin position="57"/>
        <end position="65"/>
    </location>
</feature>
<feature type="region of interest" description="5 X 9 AA approximate tandem repeats">
    <location>
        <begin position="21"/>
        <end position="65"/>
    </location>
</feature>
<feature type="sequence conflict" description="In Ref. 3; AAP57203." evidence="3" ref="3">
    <original>Y</original>
    <variation>H</variation>
    <location>
        <position position="4"/>
    </location>
</feature>
<feature type="sequence conflict" description="In Ref. 3; AAP57203." evidence="3" ref="3">
    <location>
        <begin position="43"/>
        <end position="51"/>
    </location>
</feature>
<comment type="function">
    <text evidence="1">Cross-linked envelope protein of keratinocytes. It is a keratinocyte protein that first appears in the cell cytosol, but ultimately becomes cross-linked to membrane proteins by transglutaminase. All that results in the formation of an insoluble envelope beneath the plasma membrane (By similarity).</text>
</comment>
<comment type="subcellular location">
    <subcellularLocation>
        <location evidence="1">Cytoplasm</location>
    </subcellularLocation>
</comment>
<comment type="tissue specificity">
    <text evidence="2">Expressed in uterus.</text>
</comment>
<comment type="developmental stage">
    <text evidence="2">Expression in uterus varies during the estrous cycle, with highest levels during proestrus and estrus stages and declining sharply from metestrus to diestrus. During early pregnancy, uterine expression is markedly increased at 1 dpc, declines rapidly at 2 dpc and is almost undetectable from 3 dpc to 6 dpc.</text>
</comment>
<comment type="induction">
    <text evidence="2">Up-regulated by estrogen in the uterus of ovariectomized animals, with strongly increased expression detected in luminal epithelial cells at 6 and 12 hours after hormone injection.</text>
</comment>
<comment type="similarity">
    <text evidence="3">Belongs to the cornifin (SPRR) family.</text>
</comment>
<sequence length="98" mass="10735">MSYYQQQCKQPCQPPPVCPPPKCPEPCPPPKCPEPCPPPVCCEPCPPPKCPEPCPPPVCCEPCPPPVCCEPCPPQPWQPKCPPVQFPPCQQKCPPKNK</sequence>
<accession>O70554</accession>
<accession>Q7TSB2</accession>
<gene>
    <name type="primary">Sprr2b</name>
</gene>